<reference key="1">
    <citation type="submission" date="1999-04" db="EMBL/GenBank/DDBJ databases">
        <title>Structural analysis of Arabidopsis thaliana chromosome 5. XI.</title>
        <authorList>
            <person name="Kaneko T."/>
            <person name="Katoh T."/>
            <person name="Asamizu E."/>
            <person name="Sato S."/>
            <person name="Nakamura Y."/>
            <person name="Kotani H."/>
            <person name="Tabata S."/>
        </authorList>
    </citation>
    <scope>NUCLEOTIDE SEQUENCE [LARGE SCALE GENOMIC DNA]</scope>
    <source>
        <strain>cv. Columbia</strain>
    </source>
</reference>
<reference key="2">
    <citation type="journal article" date="2017" name="Plant J.">
        <title>Araport11: a complete reannotation of the Arabidopsis thaliana reference genome.</title>
        <authorList>
            <person name="Cheng C.Y."/>
            <person name="Krishnakumar V."/>
            <person name="Chan A.P."/>
            <person name="Thibaud-Nissen F."/>
            <person name="Schobel S."/>
            <person name="Town C.D."/>
        </authorList>
    </citation>
    <scope>GENOME REANNOTATION</scope>
    <source>
        <strain>cv. Columbia</strain>
    </source>
</reference>
<reference key="3">
    <citation type="journal article" date="2003" name="Science">
        <title>Empirical analysis of transcriptional activity in the Arabidopsis genome.</title>
        <authorList>
            <person name="Yamada K."/>
            <person name="Lim J."/>
            <person name="Dale J.M."/>
            <person name="Chen H."/>
            <person name="Shinn P."/>
            <person name="Palm C.J."/>
            <person name="Southwick A.M."/>
            <person name="Wu H.C."/>
            <person name="Kim C.J."/>
            <person name="Nguyen M."/>
            <person name="Pham P.K."/>
            <person name="Cheuk R.F."/>
            <person name="Karlin-Newmann G."/>
            <person name="Liu S.X."/>
            <person name="Lam B."/>
            <person name="Sakano H."/>
            <person name="Wu T."/>
            <person name="Yu G."/>
            <person name="Miranda M."/>
            <person name="Quach H.L."/>
            <person name="Tripp M."/>
            <person name="Chang C.H."/>
            <person name="Lee J.M."/>
            <person name="Toriumi M.J."/>
            <person name="Chan M.M."/>
            <person name="Tang C.C."/>
            <person name="Onodera C.S."/>
            <person name="Deng J.M."/>
            <person name="Akiyama K."/>
            <person name="Ansari Y."/>
            <person name="Arakawa T."/>
            <person name="Banh J."/>
            <person name="Banno F."/>
            <person name="Bowser L."/>
            <person name="Brooks S.Y."/>
            <person name="Carninci P."/>
            <person name="Chao Q."/>
            <person name="Choy N."/>
            <person name="Enju A."/>
            <person name="Goldsmith A.D."/>
            <person name="Gurjal M."/>
            <person name="Hansen N.F."/>
            <person name="Hayashizaki Y."/>
            <person name="Johnson-Hopson C."/>
            <person name="Hsuan V.W."/>
            <person name="Iida K."/>
            <person name="Karnes M."/>
            <person name="Khan S."/>
            <person name="Koesema E."/>
            <person name="Ishida J."/>
            <person name="Jiang P.X."/>
            <person name="Jones T."/>
            <person name="Kawai J."/>
            <person name="Kamiya A."/>
            <person name="Meyers C."/>
            <person name="Nakajima M."/>
            <person name="Narusaka M."/>
            <person name="Seki M."/>
            <person name="Sakurai T."/>
            <person name="Satou M."/>
            <person name="Tamse R."/>
            <person name="Vaysberg M."/>
            <person name="Wallender E.K."/>
            <person name="Wong C."/>
            <person name="Yamamura Y."/>
            <person name="Yuan S."/>
            <person name="Shinozaki K."/>
            <person name="Davis R.W."/>
            <person name="Theologis A."/>
            <person name="Ecker J.R."/>
        </authorList>
    </citation>
    <scope>NUCLEOTIDE SEQUENCE [LARGE SCALE MRNA]</scope>
    <source>
        <strain>cv. Columbia</strain>
    </source>
</reference>
<reference key="4">
    <citation type="submission" date="2002-03" db="EMBL/GenBank/DDBJ databases">
        <title>Full-length cDNA from Arabidopsis thaliana.</title>
        <authorList>
            <person name="Brover V.V."/>
            <person name="Troukhan M.E."/>
            <person name="Alexandrov N.A."/>
            <person name="Lu Y.-P."/>
            <person name="Flavell R.B."/>
            <person name="Feldmann K.A."/>
        </authorList>
    </citation>
    <scope>NUCLEOTIDE SEQUENCE [LARGE SCALE MRNA]</scope>
</reference>
<reference key="5">
    <citation type="journal article" date="2000" name="Plant Physiol.">
        <title>An enhancer trap line associated with a D-class cyclin gene in Arabidopsis.</title>
        <authorList>
            <person name="Swaminathan K."/>
            <person name="Yang Y."/>
            <person name="Grotz N."/>
            <person name="Campisi L."/>
            <person name="Jack T."/>
        </authorList>
    </citation>
    <scope>TISSUE SPECIFICITY</scope>
</reference>
<reference key="6">
    <citation type="journal article" date="2004" name="Plant Physiol.">
        <title>Genome-wide analysis of the cyclin family in Arabidopsis and comparative phylogenetic analysis of plant cyclin-like proteins.</title>
        <authorList>
            <person name="Wang G."/>
            <person name="Kong H."/>
            <person name="Sun Y."/>
            <person name="Zhang X."/>
            <person name="Zhang W."/>
            <person name="Altman N."/>
            <person name="dePamphilis C.W."/>
            <person name="Ma H."/>
        </authorList>
    </citation>
    <scope>GENE FAMILY</scope>
    <scope>NOMENCLATURE</scope>
</reference>
<reference key="7">
    <citation type="journal article" date="2014" name="J. Exp. Bot.">
        <title>Requirement for A-type cyclin-dependent kinase and cyclins for the terminal division in the stomatal lineage of Arabidopsis.</title>
        <authorList>
            <person name="Yang K."/>
            <person name="Wang H."/>
            <person name="Xue S."/>
            <person name="Qu X."/>
            <person name="Zou J."/>
            <person name="Le J."/>
        </authorList>
    </citation>
    <scope>FUNCTION</scope>
    <scope>INTERACTION WITH CDKA-1</scope>
    <source>
        <strain>cv. Columbia</strain>
    </source>
</reference>
<organism>
    <name type="scientific">Arabidopsis thaliana</name>
    <name type="common">Mouse-ear cress</name>
    <dbReference type="NCBI Taxonomy" id="3702"/>
    <lineage>
        <taxon>Eukaryota</taxon>
        <taxon>Viridiplantae</taxon>
        <taxon>Streptophyta</taxon>
        <taxon>Embryophyta</taxon>
        <taxon>Tracheophyta</taxon>
        <taxon>Spermatophyta</taxon>
        <taxon>Magnoliopsida</taxon>
        <taxon>eudicotyledons</taxon>
        <taxon>Gunneridae</taxon>
        <taxon>Pentapetalae</taxon>
        <taxon>rosids</taxon>
        <taxon>malvids</taxon>
        <taxon>Brassicales</taxon>
        <taxon>Brassicaceae</taxon>
        <taxon>Camelineae</taxon>
        <taxon>Arabidopsis</taxon>
    </lineage>
</organism>
<sequence length="367" mass="42351">MALEKEEEASQNGAFCVLDGLYCEEETGFVEDDLDDDGDLDFLEKSDESVVKFQFLPLLDMFLWDDDEILSLISKENETNPCFGEQILDGFLVSCRKEALDWVLRVKSHYGFTSLTAILAVNYFDRFMTSIKLQTDKPWMSQLVAVASLSLAAKVEEIQVPLLLDLQVEEARYLFEAKTIQRMELLILSTLQWRMHPVTPISFFDHIIRRFGSKWHQQLDFCRKCERLLISVIADTRFMRYFPSVLATAIMILVFEELKPCDEVEYQSQITTLLKVNQEKVNECYELLLEHNPSKKRMMNLVDQDSPSGVLDFDDSSNSSWNVSTTASVSSSSSSPEPLLKRRRVQEQQMRLPSINRMFLDVLSSPR</sequence>
<dbReference type="EMBL" id="AB025614">
    <property type="protein sequence ID" value="BAB09645.1"/>
    <property type="molecule type" value="Genomic_DNA"/>
</dbReference>
<dbReference type="EMBL" id="CP002688">
    <property type="protein sequence ID" value="AED98321.1"/>
    <property type="molecule type" value="Genomic_DNA"/>
</dbReference>
<dbReference type="EMBL" id="AY062645">
    <property type="protein sequence ID" value="AAL32723.1"/>
    <property type="molecule type" value="mRNA"/>
</dbReference>
<dbReference type="EMBL" id="AY093254">
    <property type="protein sequence ID" value="AAM13253.1"/>
    <property type="molecule type" value="mRNA"/>
</dbReference>
<dbReference type="EMBL" id="AY087540">
    <property type="protein sequence ID" value="AAM65082.1"/>
    <property type="molecule type" value="mRNA"/>
</dbReference>
<dbReference type="RefSeq" id="NP_201527.1">
    <property type="nucleotide sequence ID" value="NM_126126.3"/>
</dbReference>
<dbReference type="SMR" id="Q9FGQ7"/>
<dbReference type="BioGRID" id="22103">
    <property type="interactions" value="20"/>
</dbReference>
<dbReference type="FunCoup" id="Q9FGQ7">
    <property type="interactions" value="1108"/>
</dbReference>
<dbReference type="IntAct" id="Q9FGQ7">
    <property type="interactions" value="10"/>
</dbReference>
<dbReference type="STRING" id="3702.Q9FGQ7"/>
<dbReference type="iPTMnet" id="Q9FGQ7"/>
<dbReference type="PaxDb" id="3702-AT5G67260.1"/>
<dbReference type="DNASU" id="836861"/>
<dbReference type="EnsemblPlants" id="AT5G67260.1">
    <property type="protein sequence ID" value="AT5G67260.1"/>
    <property type="gene ID" value="AT5G67260"/>
</dbReference>
<dbReference type="GeneID" id="836861"/>
<dbReference type="Gramene" id="AT5G67260.1">
    <property type="protein sequence ID" value="AT5G67260.1"/>
    <property type="gene ID" value="AT5G67260"/>
</dbReference>
<dbReference type="KEGG" id="ath:AT5G67260"/>
<dbReference type="Araport" id="AT5G67260"/>
<dbReference type="TAIR" id="AT5G67260">
    <property type="gene designation" value="CYCD3"/>
</dbReference>
<dbReference type="eggNOG" id="KOG0656">
    <property type="taxonomic scope" value="Eukaryota"/>
</dbReference>
<dbReference type="HOGENOM" id="CLU_048040_0_0_1"/>
<dbReference type="InParanoid" id="Q9FGQ7"/>
<dbReference type="OMA" id="DHIMRRF"/>
<dbReference type="OrthoDB" id="5590282at2759"/>
<dbReference type="PhylomeDB" id="Q9FGQ7"/>
<dbReference type="PRO" id="PR:Q9FGQ7"/>
<dbReference type="Proteomes" id="UP000006548">
    <property type="component" value="Chromosome 5"/>
</dbReference>
<dbReference type="ExpressionAtlas" id="Q9FGQ7">
    <property type="expression patterns" value="baseline and differential"/>
</dbReference>
<dbReference type="GO" id="GO:0051301">
    <property type="term" value="P:cell division"/>
    <property type="evidence" value="ECO:0007669"/>
    <property type="project" value="UniProtKB-KW"/>
</dbReference>
<dbReference type="GO" id="GO:0010444">
    <property type="term" value="P:guard mother cell differentiation"/>
    <property type="evidence" value="ECO:0000315"/>
    <property type="project" value="UniProtKB"/>
</dbReference>
<dbReference type="GO" id="GO:1901371">
    <property type="term" value="P:regulation of leaf morphogenesis"/>
    <property type="evidence" value="ECO:0000315"/>
    <property type="project" value="TAIR"/>
</dbReference>
<dbReference type="GO" id="GO:0048316">
    <property type="term" value="P:seed development"/>
    <property type="evidence" value="ECO:0000316"/>
    <property type="project" value="TAIR"/>
</dbReference>
<dbReference type="CDD" id="cd20543">
    <property type="entry name" value="CYCLIN_AtCycD-like_rpt1"/>
    <property type="match status" value="1"/>
</dbReference>
<dbReference type="CDD" id="cd20544">
    <property type="entry name" value="CYCLIN_AtCycD-like_rpt2"/>
    <property type="match status" value="1"/>
</dbReference>
<dbReference type="FunFam" id="1.10.472.10:FF:000070">
    <property type="entry name" value="CYCLIN D32"/>
    <property type="match status" value="1"/>
</dbReference>
<dbReference type="FunFam" id="1.10.472.10:FF:000074">
    <property type="entry name" value="D3-type cyclin"/>
    <property type="match status" value="1"/>
</dbReference>
<dbReference type="Gene3D" id="1.10.472.10">
    <property type="entry name" value="Cyclin-like"/>
    <property type="match status" value="2"/>
</dbReference>
<dbReference type="InterPro" id="IPR039361">
    <property type="entry name" value="Cyclin"/>
</dbReference>
<dbReference type="InterPro" id="IPR013763">
    <property type="entry name" value="Cyclin-like_dom"/>
</dbReference>
<dbReference type="InterPro" id="IPR036915">
    <property type="entry name" value="Cyclin-like_sf"/>
</dbReference>
<dbReference type="InterPro" id="IPR004367">
    <property type="entry name" value="Cyclin_C-dom"/>
</dbReference>
<dbReference type="InterPro" id="IPR006671">
    <property type="entry name" value="Cyclin_N"/>
</dbReference>
<dbReference type="InterPro" id="IPR048258">
    <property type="entry name" value="Cyclins_cyclin-box"/>
</dbReference>
<dbReference type="PANTHER" id="PTHR10177">
    <property type="entry name" value="CYCLINS"/>
    <property type="match status" value="1"/>
</dbReference>
<dbReference type="Pfam" id="PF02984">
    <property type="entry name" value="Cyclin_C"/>
    <property type="match status" value="1"/>
</dbReference>
<dbReference type="Pfam" id="PF00134">
    <property type="entry name" value="Cyclin_N"/>
    <property type="match status" value="1"/>
</dbReference>
<dbReference type="SMART" id="SM00385">
    <property type="entry name" value="CYCLIN"/>
    <property type="match status" value="1"/>
</dbReference>
<dbReference type="SMART" id="SM01332">
    <property type="entry name" value="Cyclin_C"/>
    <property type="match status" value="1"/>
</dbReference>
<dbReference type="SUPFAM" id="SSF47954">
    <property type="entry name" value="Cyclin-like"/>
    <property type="match status" value="2"/>
</dbReference>
<dbReference type="PROSITE" id="PS00292">
    <property type="entry name" value="CYCLINS"/>
    <property type="match status" value="1"/>
</dbReference>
<evidence type="ECO:0000256" key="1">
    <source>
        <dbReference type="SAM" id="MobiDB-lite"/>
    </source>
</evidence>
<evidence type="ECO:0000269" key="2">
    <source>
    </source>
</evidence>
<evidence type="ECO:0000269" key="3">
    <source>
    </source>
</evidence>
<evidence type="ECO:0000305" key="4"/>
<protein>
    <recommendedName>
        <fullName>Cyclin-D3-2</fullName>
    </recommendedName>
    <alternativeName>
        <fullName>G1/S-specific cyclin-D3-2</fullName>
        <shortName>CycD3;2</shortName>
    </alternativeName>
</protein>
<feature type="chain" id="PRO_0000287025" description="Cyclin-D3-2">
    <location>
        <begin position="1"/>
        <end position="367"/>
    </location>
</feature>
<feature type="region of interest" description="Disordered" evidence="1">
    <location>
        <begin position="324"/>
        <end position="347"/>
    </location>
</feature>
<feature type="compositionally biased region" description="Low complexity" evidence="1">
    <location>
        <begin position="324"/>
        <end position="335"/>
    </location>
</feature>
<gene>
    <name type="primary">CYCD3-2</name>
    <name type="ordered locus">At5g67260</name>
    <name type="ORF">K3G17.2</name>
</gene>
<name>CCD32_ARATH</name>
<accession>Q9FGQ7</accession>
<keyword id="KW-0131">Cell cycle</keyword>
<keyword id="KW-0132">Cell division</keyword>
<keyword id="KW-0195">Cyclin</keyword>
<keyword id="KW-1185">Reference proteome</keyword>
<proteinExistence type="evidence at protein level"/>
<comment type="function">
    <text evidence="3">Promotes divisions in the guard cells (GCs) after the guard mother cells (GMC) symmetric division when in the presence of CDKA-1.</text>
</comment>
<comment type="subunit">
    <text evidence="3">Interacts with CDKA-1.</text>
</comment>
<comment type="tissue specificity">
    <text evidence="2">Expressed in developing vegetative and floral primordia.</text>
</comment>
<comment type="similarity">
    <text evidence="4">Belongs to the cyclin family. Cyclin D subfamily.</text>
</comment>